<sequence>MMACRDPKPGAKRLVRAQTLQKQRRAPVGPRAPPPDEEDPRLKCKNCGAFGHMARSTRCPMKCWKAALVPPTLGKKEGKENLKPWKPQVEANPGPLNKDKGEKEERPRQQDPQRKALLHIFSGKPPEKPLPNRKGSTESSVYLRVASGPMPVHTTSKRPRVDPVLADRSATEMSDRGSALASLSPLRKASLSSSSSLGPKERQTGAAADIPQPAVRHQGPEPLLVVKPTHSSPEGGCREVPQAASKTHGLLQAISPQAQDKRPAVTSQPCPPAATHSLGLGSNLSFGPGAKRPAQAPIQACLNFPKKPRLGPFQIPESAIQGGELGAPEYLQPPPATTELGPSTSPQMGRRTPAQVSSVDRQPPHSRPCLPTAQACTMSHHPATSHDGAQPLRVLFRRLENGRWSSSLLAAPSFHSPEKPGAFLAQSPHVSEKSEVPRVRVPPNVLYEDLQVSSSSEDSDSDLE</sequence>
<organism>
    <name type="scientific">Homo sapiens</name>
    <name type="common">Human</name>
    <dbReference type="NCBI Taxonomy" id="9606"/>
    <lineage>
        <taxon>Eukaryota</taxon>
        <taxon>Metazoa</taxon>
        <taxon>Chordata</taxon>
        <taxon>Craniata</taxon>
        <taxon>Vertebrata</taxon>
        <taxon>Euteleostomi</taxon>
        <taxon>Mammalia</taxon>
        <taxon>Eutheria</taxon>
        <taxon>Euarchontoglires</taxon>
        <taxon>Primates</taxon>
        <taxon>Haplorrhini</taxon>
        <taxon>Catarrhini</taxon>
        <taxon>Hominidae</taxon>
        <taxon>Homo</taxon>
    </lineage>
</organism>
<evidence type="ECO:0000256" key="1">
    <source>
        <dbReference type="SAM" id="MobiDB-lite"/>
    </source>
</evidence>
<evidence type="ECO:0000305" key="2"/>
<evidence type="ECO:0000312" key="3">
    <source>
        <dbReference type="HGNC" id="HGNC:43746"/>
    </source>
</evidence>
<accession>D6RGX4</accession>
<reference key="1">
    <citation type="journal article" date="2005" name="Nature">
        <title>Generation and annotation of the DNA sequences of human chromosomes 2 and 4.</title>
        <authorList>
            <person name="Hillier L.W."/>
            <person name="Graves T.A."/>
            <person name="Fulton R.S."/>
            <person name="Fulton L.A."/>
            <person name="Pepin K.H."/>
            <person name="Minx P."/>
            <person name="Wagner-McPherson C."/>
            <person name="Layman D."/>
            <person name="Wylie K."/>
            <person name="Sekhon M."/>
            <person name="Becker M.C."/>
            <person name="Fewell G.A."/>
            <person name="Delehaunty K.D."/>
            <person name="Miner T.L."/>
            <person name="Nash W.E."/>
            <person name="Kremitzki C."/>
            <person name="Oddy L."/>
            <person name="Du H."/>
            <person name="Sun H."/>
            <person name="Bradshaw-Cordum H."/>
            <person name="Ali J."/>
            <person name="Carter J."/>
            <person name="Cordes M."/>
            <person name="Harris A."/>
            <person name="Isak A."/>
            <person name="van Brunt A."/>
            <person name="Nguyen C."/>
            <person name="Du F."/>
            <person name="Courtney L."/>
            <person name="Kalicki J."/>
            <person name="Ozersky P."/>
            <person name="Abbott S."/>
            <person name="Armstrong J."/>
            <person name="Belter E.A."/>
            <person name="Caruso L."/>
            <person name="Cedroni M."/>
            <person name="Cotton M."/>
            <person name="Davidson T."/>
            <person name="Desai A."/>
            <person name="Elliott G."/>
            <person name="Erb T."/>
            <person name="Fronick C."/>
            <person name="Gaige T."/>
            <person name="Haakenson W."/>
            <person name="Haglund K."/>
            <person name="Holmes A."/>
            <person name="Harkins R."/>
            <person name="Kim K."/>
            <person name="Kruchowski S.S."/>
            <person name="Strong C.M."/>
            <person name="Grewal N."/>
            <person name="Goyea E."/>
            <person name="Hou S."/>
            <person name="Levy A."/>
            <person name="Martinka S."/>
            <person name="Mead K."/>
            <person name="McLellan M.D."/>
            <person name="Meyer R."/>
            <person name="Randall-Maher J."/>
            <person name="Tomlinson C."/>
            <person name="Dauphin-Kohlberg S."/>
            <person name="Kozlowicz-Reilly A."/>
            <person name="Shah N."/>
            <person name="Swearengen-Shahid S."/>
            <person name="Snider J."/>
            <person name="Strong J.T."/>
            <person name="Thompson J."/>
            <person name="Yoakum M."/>
            <person name="Leonard S."/>
            <person name="Pearman C."/>
            <person name="Trani L."/>
            <person name="Radionenko M."/>
            <person name="Waligorski J.E."/>
            <person name="Wang C."/>
            <person name="Rock S.M."/>
            <person name="Tin-Wollam A.-M."/>
            <person name="Maupin R."/>
            <person name="Latreille P."/>
            <person name="Wendl M.C."/>
            <person name="Yang S.-P."/>
            <person name="Pohl C."/>
            <person name="Wallis J.W."/>
            <person name="Spieth J."/>
            <person name="Bieri T.A."/>
            <person name="Berkowicz N."/>
            <person name="Nelson J.O."/>
            <person name="Osborne J."/>
            <person name="Ding L."/>
            <person name="Meyer R."/>
            <person name="Sabo A."/>
            <person name="Shotland Y."/>
            <person name="Sinha P."/>
            <person name="Wohldmann P.E."/>
            <person name="Cook L.L."/>
            <person name="Hickenbotham M.T."/>
            <person name="Eldred J."/>
            <person name="Williams D."/>
            <person name="Jones T.A."/>
            <person name="She X."/>
            <person name="Ciccarelli F.D."/>
            <person name="Izaurralde E."/>
            <person name="Taylor J."/>
            <person name="Schmutz J."/>
            <person name="Myers R.M."/>
            <person name="Cox D.R."/>
            <person name="Huang X."/>
            <person name="McPherson J.D."/>
            <person name="Mardis E.R."/>
            <person name="Clifton S.W."/>
            <person name="Warren W.C."/>
            <person name="Chinwalla A.T."/>
            <person name="Eddy S.R."/>
            <person name="Marra M.A."/>
            <person name="Ovcharenko I."/>
            <person name="Furey T.S."/>
            <person name="Miller W."/>
            <person name="Eichler E.E."/>
            <person name="Bork P."/>
            <person name="Suyama M."/>
            <person name="Torrents D."/>
            <person name="Waterston R.H."/>
            <person name="Wilson R.K."/>
        </authorList>
    </citation>
    <scope>NUCLEOTIDE SEQUENCE [LARGE SCALE GENOMIC DNA]</scope>
</reference>
<gene>
    <name evidence="3" type="primary">FAM90A26</name>
    <name evidence="3" type="synonym">FAM90A26P</name>
</gene>
<proteinExistence type="inferred from homology"/>
<comment type="similarity">
    <text evidence="2">Belongs to the FAM90 family.</text>
</comment>
<name>F90AP_HUMAN</name>
<keyword id="KW-1185">Reference proteome</keyword>
<dbReference type="EMBL" id="AC108519">
    <property type="status" value="NOT_ANNOTATED_CDS"/>
    <property type="molecule type" value="Genomic_DNA"/>
</dbReference>
<dbReference type="CCDS" id="CCDS87208.1"/>
<dbReference type="RefSeq" id="NP_001345347.1">
    <property type="nucleotide sequence ID" value="NM_001358418.3"/>
</dbReference>
<dbReference type="FunCoup" id="D6RGX4">
    <property type="interactions" value="12"/>
</dbReference>
<dbReference type="IntAct" id="D6RGX4">
    <property type="interactions" value="1"/>
</dbReference>
<dbReference type="iPTMnet" id="D6RGX4"/>
<dbReference type="PhosphoSitePlus" id="D6RGX4"/>
<dbReference type="BioMuta" id="FAM90A26"/>
<dbReference type="MassIVE" id="D6RGX4"/>
<dbReference type="PaxDb" id="9606-ENSP00000421131"/>
<dbReference type="ProteomicsDB" id="14748"/>
<dbReference type="Ensembl" id="ENST00000512047.2">
    <property type="protein sequence ID" value="ENSP00000421131.1"/>
    <property type="gene ID" value="ENSG00000229924.3"/>
</dbReference>
<dbReference type="GeneID" id="100287045"/>
<dbReference type="MANE-Select" id="ENST00000512047.2">
    <property type="protein sequence ID" value="ENSP00000421131.1"/>
    <property type="RefSeq nucleotide sequence ID" value="NM_001358418.3"/>
    <property type="RefSeq protein sequence ID" value="NP_001345347.1"/>
</dbReference>
<dbReference type="UCSC" id="uc062vco.1">
    <property type="organism name" value="human"/>
</dbReference>
<dbReference type="AGR" id="HGNC:43746"/>
<dbReference type="GeneCards" id="FAM90A26"/>
<dbReference type="HGNC" id="HGNC:43746">
    <property type="gene designation" value="FAM90A26"/>
</dbReference>
<dbReference type="HPA" id="ENSG00000229924">
    <property type="expression patterns" value="Not detected"/>
</dbReference>
<dbReference type="neXtProt" id="NX_D6RGX4"/>
<dbReference type="VEuPathDB" id="HostDB:ENSG00000229924"/>
<dbReference type="GeneTree" id="ENSGT00910000144208"/>
<dbReference type="HOGENOM" id="CLU_047915_0_1_1"/>
<dbReference type="InParanoid" id="D6RGX4"/>
<dbReference type="OMA" id="ESRVKCK"/>
<dbReference type="PAN-GO" id="D6RGX4">
    <property type="GO annotations" value="0 GO annotations based on evolutionary models"/>
</dbReference>
<dbReference type="PhylomeDB" id="D6RGX4"/>
<dbReference type="TreeFam" id="TF338572"/>
<dbReference type="PathwayCommons" id="D6RGX4"/>
<dbReference type="Pharos" id="D6RGX4">
    <property type="development level" value="Tdark"/>
</dbReference>
<dbReference type="Proteomes" id="UP000005640">
    <property type="component" value="Chromosome 4"/>
</dbReference>
<dbReference type="RNAct" id="D6RGX4">
    <property type="molecule type" value="protein"/>
</dbReference>
<dbReference type="Bgee" id="ENSG00000229924">
    <property type="expression patterns" value="Expressed in male germ line stem cell (sensu Vertebrata) in testis and 1 other cell type or tissue"/>
</dbReference>
<dbReference type="InterPro" id="IPR039213">
    <property type="entry name" value="FAM90"/>
</dbReference>
<dbReference type="InterPro" id="IPR041670">
    <property type="entry name" value="Znf-CCHC_6"/>
</dbReference>
<dbReference type="PANTHER" id="PTHR16035:SF14">
    <property type="entry name" value="FAMILY WITH SEQUENCE SIMILARITY 90 MEMBER A11, PSEUDOGENE-RELATED"/>
    <property type="match status" value="1"/>
</dbReference>
<dbReference type="PANTHER" id="PTHR16035">
    <property type="entry name" value="PROTEIN FAM90A1"/>
    <property type="match status" value="1"/>
</dbReference>
<dbReference type="Pfam" id="PF15288">
    <property type="entry name" value="zf-CCHC_6"/>
    <property type="match status" value="1"/>
</dbReference>
<protein>
    <recommendedName>
        <fullName evidence="2">Protein FAM90A26</fullName>
    </recommendedName>
</protein>
<feature type="chain" id="PRO_0000444700" description="Protein FAM90A26">
    <location>
        <begin position="1"/>
        <end position="464"/>
    </location>
</feature>
<feature type="region of interest" description="Disordered" evidence="1">
    <location>
        <begin position="1"/>
        <end position="42"/>
    </location>
</feature>
<feature type="region of interest" description="Disordered" evidence="1">
    <location>
        <begin position="70"/>
        <end position="293"/>
    </location>
</feature>
<feature type="region of interest" description="Disordered" evidence="1">
    <location>
        <begin position="312"/>
        <end position="390"/>
    </location>
</feature>
<feature type="region of interest" description="Disordered" evidence="1">
    <location>
        <begin position="410"/>
        <end position="442"/>
    </location>
</feature>
<feature type="compositionally biased region" description="Basic and acidic residues" evidence="1">
    <location>
        <begin position="74"/>
        <end position="83"/>
    </location>
</feature>
<feature type="compositionally biased region" description="Basic and acidic residues" evidence="1">
    <location>
        <begin position="97"/>
        <end position="114"/>
    </location>
</feature>
<feature type="compositionally biased region" description="Low complexity" evidence="1">
    <location>
        <begin position="178"/>
        <end position="197"/>
    </location>
</feature>